<feature type="chain" id="PRO_0000238712" description="Capsid protein" evidence="1">
    <location>
        <begin position="1"/>
        <end position="253"/>
    </location>
</feature>
<feature type="chain" id="PRO_0000238713" description="Precursor of protein E3/E2" evidence="1">
    <location>
        <begin position="254"/>
        <end position="742"/>
    </location>
</feature>
<feature type="chain" id="PRO_0000238714" description="Assembly protein E3" evidence="1">
    <location>
        <begin position="254"/>
        <end position="321"/>
    </location>
</feature>
<feature type="chain" id="PRO_0000238715" description="Spike glycoprotein E2" evidence="1">
    <location>
        <begin position="322"/>
        <end position="742"/>
    </location>
</feature>
<feature type="chain" id="PRO_0000238716" description="6K protein" evidence="1">
    <location>
        <begin position="743"/>
        <end position="800"/>
    </location>
</feature>
<feature type="chain" id="PRO_0000238717" description="Spike glycoprotein E1" evidence="1">
    <location>
        <begin position="801"/>
        <end position="1239"/>
    </location>
</feature>
<feature type="topological domain" description="Extracellular" evidence="12">
    <location>
        <begin position="322"/>
        <end position="686"/>
    </location>
</feature>
<feature type="transmembrane region" description="Helical" evidence="12">
    <location>
        <begin position="687"/>
        <end position="707"/>
    </location>
</feature>
<feature type="topological domain" description="Cytoplasmic" evidence="12">
    <location>
        <begin position="708"/>
        <end position="751"/>
    </location>
</feature>
<feature type="topological domain" description="Extracellular" evidence="12">
    <location>
        <begin position="752"/>
        <end position="756"/>
    </location>
</feature>
<feature type="transmembrane region" description="Helical" evidence="12">
    <location>
        <begin position="757"/>
        <end position="777"/>
    </location>
</feature>
<feature type="topological domain" description="Cytoplasmic" evidence="12">
    <location>
        <begin position="778"/>
        <end position="779"/>
    </location>
</feature>
<feature type="transmembrane region" description="Helical" evidence="12">
    <location>
        <begin position="780"/>
        <end position="800"/>
    </location>
</feature>
<feature type="topological domain" description="Extracellular" evidence="12">
    <location>
        <begin position="801"/>
        <end position="1216"/>
    </location>
</feature>
<feature type="transmembrane region" description="Helical" evidence="12">
    <location>
        <begin position="1217"/>
        <end position="1237"/>
    </location>
</feature>
<feature type="topological domain" description="Cytoplasmic" evidence="12">
    <location>
        <begin position="1238"/>
        <end position="1239"/>
    </location>
</feature>
<feature type="domain" description="Peptidase S3" evidence="13">
    <location>
        <begin position="105"/>
        <end position="253"/>
    </location>
</feature>
<feature type="region of interest" description="Disordered" evidence="14">
    <location>
        <begin position="15"/>
        <end position="95"/>
    </location>
</feature>
<feature type="region of interest" description="Host transcription inhibition" evidence="4">
    <location>
        <begin position="36"/>
        <end position="62"/>
    </location>
</feature>
<feature type="region of interest" description="Binding to the viral RNA" evidence="6">
    <location>
        <begin position="78"/>
        <end position="106"/>
    </location>
</feature>
<feature type="region of interest" description="Ribosome-binding" evidence="6">
    <location>
        <begin position="91"/>
        <end position="105"/>
    </location>
</feature>
<feature type="region of interest" description="Interaction with spike glycoprotein E2" evidence="3">
    <location>
        <begin position="147"/>
        <end position="152"/>
    </location>
</feature>
<feature type="region of interest" description="Dimerization of the capsid protein" evidence="5">
    <location>
        <begin position="175"/>
        <end position="185"/>
    </location>
</feature>
<feature type="region of interest" description="Dimerization of the capsid protein" evidence="5">
    <location>
        <begin position="211"/>
        <end position="215"/>
    </location>
</feature>
<feature type="region of interest" description="Functions as an uncleaved signal peptide for the precursor of protein E3/E2" evidence="2">
    <location>
        <begin position="254"/>
        <end position="269"/>
    </location>
</feature>
<feature type="region of interest" description="Interaction with the capsid protein" evidence="3">
    <location>
        <begin position="710"/>
        <end position="714"/>
    </location>
</feature>
<feature type="region of interest" description="E1 fusion peptide loop" evidence="11">
    <location>
        <begin position="884"/>
        <end position="901"/>
    </location>
</feature>
<feature type="short sequence motif" description="Nuclear localization signal" evidence="4">
    <location>
        <begin position="55"/>
        <end position="91"/>
    </location>
</feature>
<feature type="short sequence motif" description="Nuclear export signal" evidence="4">
    <location>
        <begin position="136"/>
        <end position="146"/>
    </location>
</feature>
<feature type="compositionally biased region" description="Low complexity" evidence="14">
    <location>
        <begin position="38"/>
        <end position="56"/>
    </location>
</feature>
<feature type="compositionally biased region" description="Basic residues" evidence="14">
    <location>
        <begin position="57"/>
        <end position="95"/>
    </location>
</feature>
<feature type="active site" description="Charge relay system" evidence="13">
    <location>
        <position position="131"/>
    </location>
</feature>
<feature type="active site" description="Charge relay system" evidence="13">
    <location>
        <position position="153"/>
    </location>
</feature>
<feature type="active site" description="Charge relay system" evidence="13">
    <location>
        <position position="205"/>
    </location>
</feature>
<feature type="site" description="Involved in dimerization of the capsid protein" evidence="10">
    <location>
        <position position="179"/>
    </location>
</feature>
<feature type="site" description="Involved in dimerization of the capsid protein" evidence="10">
    <location>
        <position position="212"/>
    </location>
</feature>
<feature type="site" description="Cleavage; by autolysis" evidence="2">
    <location>
        <begin position="253"/>
        <end position="254"/>
    </location>
</feature>
<feature type="site" description="Cleavage; by host furin" evidence="2">
    <location>
        <begin position="321"/>
        <end position="322"/>
    </location>
</feature>
<feature type="site" description="Cleavage; by host signal peptidase" evidence="2">
    <location>
        <begin position="742"/>
        <end position="743"/>
    </location>
</feature>
<feature type="site" description="Cleavage; by host signal peptidase" evidence="2">
    <location>
        <begin position="800"/>
        <end position="801"/>
    </location>
</feature>
<feature type="lipid moiety-binding region" description="S-palmitoyl cysteine; by host" evidence="16">
    <location>
        <position position="705"/>
    </location>
</feature>
<feature type="lipid moiety-binding region" description="S-palmitoyl cysteine; by host" evidence="16">
    <location>
        <position position="708"/>
    </location>
</feature>
<feature type="lipid moiety-binding region" description="S-palmitoyl cysteine; by host" evidence="16">
    <location>
        <position position="715"/>
    </location>
</feature>
<feature type="lipid moiety-binding region" description="S-palmitoyl cysteine; by host" evidence="16">
    <location>
        <position position="735"/>
    </location>
</feature>
<feature type="lipid moiety-binding region" description="S-palmitoyl cysteine; by host" evidence="16">
    <location>
        <position position="736"/>
    </location>
</feature>
<feature type="lipid moiety-binding region" description="S-palmitoyl cysteine; by host" evidence="16">
    <location>
        <position position="1236"/>
    </location>
</feature>
<feature type="glycosylation site" description="N-linked (GlcNAc...) asparagine; by host" evidence="12">
    <location>
        <position position="268"/>
    </location>
</feature>
<feature type="glycosylation site" description="N-linked (GlcNAc...) asparagine; by host" evidence="16">
    <location>
        <position position="941"/>
    </location>
</feature>
<feature type="glycosylation site" description="N-linked (GlcNAc...) asparagine; by host" evidence="16">
    <location>
        <position position="1009"/>
    </location>
</feature>
<feature type="glycosylation site" description="N-linked (GlcNAc...) asparagine; by host" evidence="9">
    <location>
        <position position="1070"/>
    </location>
</feature>
<feature type="disulfide bond" evidence="2">
    <location>
        <begin position="105"/>
        <end position="120"/>
    </location>
</feature>
<feature type="disulfide bond" evidence="8">
    <location>
        <begin position="264"/>
        <end position="273"/>
    </location>
</feature>
<feature type="disulfide bond" evidence="8">
    <location>
        <begin position="278"/>
        <end position="282"/>
    </location>
</feature>
<feature type="disulfide bond" evidence="8">
    <location>
        <begin position="281"/>
        <end position="313"/>
    </location>
</feature>
<feature type="disulfide bond" evidence="16 19">
    <location>
        <begin position="339"/>
        <end position="443"/>
    </location>
</feature>
<feature type="disulfide bond" evidence="16 19">
    <location>
        <begin position="342"/>
        <end position="348"/>
    </location>
</feature>
<feature type="disulfide bond" evidence="16 19">
    <location>
        <begin position="411"/>
        <end position="425"/>
    </location>
</feature>
<feature type="disulfide bond" evidence="8">
    <location>
        <begin position="471"/>
        <end position="585"/>
    </location>
</feature>
<feature type="disulfide bond" evidence="8">
    <location>
        <begin position="519"/>
        <end position="545"/>
    </location>
</feature>
<feature type="disulfide bond" evidence="8">
    <location>
        <begin position="521"/>
        <end position="539"/>
    </location>
</feature>
<feature type="disulfide bond" evidence="8">
    <location>
        <begin position="715"/>
        <end position="736"/>
    </location>
</feature>
<feature type="disulfide bond" evidence="16 19">
    <location>
        <begin position="849"/>
        <end position="914"/>
    </location>
</feature>
<feature type="disulfide bond" evidence="16 19">
    <location>
        <begin position="862"/>
        <end position="894"/>
    </location>
</feature>
<feature type="disulfide bond" evidence="16 19">
    <location>
        <begin position="863"/>
        <end position="896"/>
    </location>
</feature>
<feature type="disulfide bond" evidence="16 19">
    <location>
        <begin position="868"/>
        <end position="878"/>
    </location>
</feature>
<feature type="disulfide bond" evidence="16 19">
    <location>
        <begin position="1059"/>
        <end position="1071"/>
    </location>
</feature>
<feature type="disulfide bond" evidence="16 19">
    <location>
        <begin position="1101"/>
        <end position="1176"/>
    </location>
</feature>
<feature type="disulfide bond" evidence="16 19">
    <location>
        <begin position="1106"/>
        <end position="1180"/>
    </location>
</feature>
<feature type="disulfide bond" evidence="16 19">
    <location>
        <begin position="1128"/>
        <end position="1170"/>
    </location>
</feature>
<feature type="sequence variant">
    <original>G</original>
    <variation>A</variation>
    <location>
        <position position="826"/>
    </location>
</feature>
<feature type="sequence variant">
    <original>K</original>
    <variation>R</variation>
    <location>
        <position position="1020"/>
    </location>
</feature>
<feature type="mutagenesis site" description="Modification of the ion channel properties of protein 6K with a loss of Na(+) selectivity." evidence="15">
    <original>S</original>
    <variation>P</variation>
    <location>
        <position position="765"/>
    </location>
</feature>
<proteinExistence type="evidence at protein level"/>
<evidence type="ECO:0000250" key="1"/>
<evidence type="ECO:0000250" key="2">
    <source>
        <dbReference type="UniProtKB" id="P03315"/>
    </source>
</evidence>
<evidence type="ECO:0000250" key="3">
    <source>
        <dbReference type="UniProtKB" id="P03316"/>
    </source>
</evidence>
<evidence type="ECO:0000250" key="4">
    <source>
        <dbReference type="UniProtKB" id="P09592"/>
    </source>
</evidence>
<evidence type="ECO:0000250" key="5">
    <source>
        <dbReference type="UniProtKB" id="P0DOK1"/>
    </source>
</evidence>
<evidence type="ECO:0000250" key="6">
    <source>
        <dbReference type="UniProtKB" id="P27284"/>
    </source>
</evidence>
<evidence type="ECO:0000250" key="7">
    <source>
        <dbReference type="UniProtKB" id="Q5WQY5"/>
    </source>
</evidence>
<evidence type="ECO:0000250" key="8">
    <source>
        <dbReference type="UniProtKB" id="Q5XXP3"/>
    </source>
</evidence>
<evidence type="ECO:0000250" key="9">
    <source>
        <dbReference type="UniProtKB" id="Q5Y388"/>
    </source>
</evidence>
<evidence type="ECO:0000250" key="10">
    <source>
        <dbReference type="UniProtKB" id="Q86925"/>
    </source>
</evidence>
<evidence type="ECO:0000250" key="11">
    <source>
        <dbReference type="UniProtKB" id="Q8JUX5"/>
    </source>
</evidence>
<evidence type="ECO:0000255" key="12"/>
<evidence type="ECO:0000255" key="13">
    <source>
        <dbReference type="PROSITE-ProRule" id="PRU01027"/>
    </source>
</evidence>
<evidence type="ECO:0000256" key="14">
    <source>
        <dbReference type="SAM" id="MobiDB-lite"/>
    </source>
</evidence>
<evidence type="ECO:0000269" key="15">
    <source>
    </source>
</evidence>
<evidence type="ECO:0000269" key="16">
    <source>
    </source>
</evidence>
<evidence type="ECO:0000305" key="17"/>
<evidence type="ECO:0000305" key="18">
    <source>
    </source>
</evidence>
<evidence type="ECO:0007744" key="19">
    <source>
        <dbReference type="PDB" id="2YEW"/>
    </source>
</evidence>
<comment type="function">
    <molecule>Capsid protein</molecule>
    <text evidence="2 3 6">Forms an icosahedral capsid with a T=4 symmetry composed of 240 copies of the capsid protein surrounded by a lipid membrane through which penetrate 80 spikes composed of trimers of E1-E2 heterodimers (By similarity). The capsid protein binds to the viral RNA genome at a site adjacent to a ribosome binding site for viral genome translation following genome release (By similarity). Possesses a protease activity that results in its autocatalytic cleavage from the nascent structural protein (By similarity). Following its self-cleavage, the capsid protein transiently associates with ribosomes, and within several minutes the protein binds to viral RNA and rapidly assembles into icosahedric core particles (By similarity). The resulting nucleocapsid eventually associates with the cytoplasmic domain of the spike glycoprotein E2 at the cell membrane, leading to budding and formation of mature virions (By similarity). In case of infection, new virions attach to target cells and after clathrin-mediated endocytosis their membrane fuses with the host endosomal membrane (By similarity). This leads to the release of the nucleocapsid into the cytoplasm, followed by an uncoating event necessary for the genomic RNA to become accessible (By similarity). The uncoating might be triggered by the interaction of capsid proteins with ribosomes (By similarity). Binding of ribosomes would release the genomic RNA since the same region is genomic RNA-binding and ribosome-binding (By similarity). Specifically inhibits interleukin-1 receptor-associated kinase 1/IRAK1-dependent signaling during viral entry, representing a means by which the alphaviruses may evade innate immune detection and activation prior to viral gene expression (By similarity).</text>
</comment>
<comment type="function">
    <molecule>Assembly protein E3</molecule>
    <text evidence="2">Provides the signal sequence for the translocation of the precursor of protein E3/E2 to the host endoplasmic reticulum. Furin-cleaved E3 remains associated with spike glycoprotein E1 and mediates pH protection of the latter during the transport via the secretory pathway. After virion release from the host cell, the assembly protein E3 is gradually released in the extracellular space.</text>
</comment>
<comment type="function">
    <molecule>Spike glycoprotein E2</molecule>
    <text evidence="2 7">Plays a role in viral attachment to target host cell, by binding to the cell receptor MXRA8 (By similarity). Synthesized as a p62 precursor which is processed by furin at the cell membrane just before virion budding, giving rise to E2-E1 heterodimer. The p62-E1 heterodimer is stable, whereas E2-E1 is unstable and dissociate at low pH. p62 is processed at the last step, presumably to avoid E1 fusion activation before its final export to cell surface. E2 C-terminus contains a transitory transmembrane that would be disrupted by palmitoylation, resulting in reorientation of the C-terminal tail from lumenal to cytoplasmic side. This step is critical since E2 C-terminus is involved in budding by interacting with capsid proteins. This release of E2 C-terminus in cytoplasm occurs lately in protein export, and precludes premature assembly of particles at the endoplasmic reticulum membrane (By similarity).</text>
</comment>
<comment type="function">
    <molecule>6K protein</molecule>
    <text evidence="2 15 18">Acts as a viroporin that participates in virus glycoprotein processing and transport to the plasma membrane, cell permeabilization and budding of viral particles (Probable). The cation channel is permeable to Na(+)&gt;K(+)&gt;Ca(2+) in vitro (PubMed:12228229). Disrupts the calcium homeostasis of the cell, probably at the endoplasmic reticulum level. This leads to cytoplasmic calcium elevation. Because of its lipophilic properties, the 6K protein is postulated to influence the selection of lipids that interact with the transmembrane domains of the glycoproteins, which, in turn, affects the deformability of the bilayer required for the extreme curvature that occurs as budding proceeds. Present in low amount in virions, about 3% compared to viral glycoproteins (By similarity).</text>
</comment>
<comment type="function">
    <molecule>Spike glycoprotein E1</molecule>
    <text evidence="3">Class II viral fusion protein. Fusion activity is inactive as long as E1 is bound to E2 in mature virion. After virus attachment to target cell via host MXRA8 and endocytosis, acidification of the endosome induce dissociation of E1/E2 heterodimer and concomitant trimerization of the E1 subunits. This E1 trimer is fusion active, and promotes release of viral nucleocapsid in cytoplasm after endosome and viral membrane fusion. Efficient fusion requires the presence of cholesterol and sphingolipid in the target membrane.</text>
</comment>
<comment type="catalytic activity">
    <reaction evidence="2">
        <text>Autocatalytic release of the core protein from the N-terminus of the togavirus structural polyprotein by hydrolysis of a -Trp-|-Ser- bond.</text>
        <dbReference type="EC" id="3.4.21.90"/>
    </reaction>
</comment>
<comment type="subunit">
    <molecule>Capsid protein</molecule>
    <text evidence="3 10 11 16">Homodimer (By similarity). Homomultimer (By similarity). Interacts with host karyopherin KPNA4; this interaction allows the nuclear import of the viral capsid protein (By similarity). Interacts with spike glycoprotein E2 (PubMed:21752915). Interacts with host IRAK1; the interaction leads to inhibition of IRAK1-dependent signaling (By similarity).</text>
</comment>
<comment type="subunit">
    <molecule>Precursor of protein E3/E2</molecule>
    <text evidence="2 3 5 11">The precursor of protein E3/E2 and E1 form a heterodimer shortly after synthesis (By similarity).</text>
</comment>
<comment type="subunit">
    <molecule>Spike glycoprotein E1</molecule>
    <text evidence="2 3 11 16">Interacts with spike glycoprotein E1 (PubMed:21752915). The precursor of protein E3/E2 and E1 form a heterodimer shortly after synthesis (By similarity). Processing of the precursor of protein E3/E2 into E2 and E3 results in a heterodimer of the spike glycoproteins E2 and E1 (By similarity). Spike at virion surface are constituted of a trimer of E2-E1 heterodimers (By similarity). After target cell attachment and endocytosis, E1 change conformation to form homotrimers (By similarity). Interacts with 6K protein (By similarity).</text>
</comment>
<comment type="subunit">
    <molecule>Spike glycoprotein E2</molecule>
    <text evidence="3 7 16">Interacts with spike glycoprotein E1 (PubMed:21752915). Processing of the precursor of protein E3/E2 into E2 and E3 results in a heterodimer of the spike glycoproteins E2 and E1 (By similarity). Spike at virion surface are constituted of a trimer of E2-E1 heterodimers (By similarity). Interacts with 6K protein (By similarity). Interacts with host MXRA8; this interaction mediates virus entry (By similarity). Interacts with the capsid protein (PubMed:21752915).</text>
</comment>
<comment type="subunit">
    <molecule>6K protein</molecule>
    <text evidence="3 8">Oligomer (By similarity). Interacts with spike glycoprotein E1. Interacts with spike glycoprotein E2 (By similarity).</text>
</comment>
<comment type="subcellular location">
    <molecule>Capsid protein</molecule>
    <subcellularLocation>
        <location evidence="3">Virion</location>
    </subcellularLocation>
    <subcellularLocation>
        <location evidence="11">Host cytoplasm</location>
    </subcellularLocation>
    <subcellularLocation>
        <location evidence="3">Host cell membrane</location>
    </subcellularLocation>
    <subcellularLocation>
        <location evidence="11">Host nucleus</location>
    </subcellularLocation>
    <text evidence="11">Shuttles between the cytoplasm and the nucleus.</text>
</comment>
<comment type="subcellular location">
    <molecule>Spike glycoprotein E2</molecule>
    <subcellularLocation>
        <location evidence="11">Virion membrane</location>
        <topology evidence="12">Single-pass type I membrane protein</topology>
    </subcellularLocation>
    <subcellularLocation>
        <location evidence="3">Host cell membrane</location>
        <topology evidence="11">Single-pass type I membrane protein</topology>
    </subcellularLocation>
</comment>
<comment type="subcellular location">
    <molecule>6K protein</molecule>
    <subcellularLocation>
        <location evidence="3">Host cell membrane</location>
        <topology evidence="12">Multi-pass membrane protein</topology>
    </subcellularLocation>
    <subcellularLocation>
        <location evidence="3">Virion membrane</location>
        <topology evidence="12">Multi-pass membrane protein</topology>
    </subcellularLocation>
    <subcellularLocation>
        <location evidence="3">Host Golgi apparatus</location>
    </subcellularLocation>
    <subcellularLocation>
        <location>Host Golgi apparatus</location>
        <location>Host trans-Golgi network</location>
    </subcellularLocation>
    <subcellularLocation>
        <location evidence="3">Host endoplasmic reticulum</location>
    </subcellularLocation>
</comment>
<comment type="subcellular location">
    <molecule>Spike glycoprotein E1</molecule>
    <subcellularLocation>
        <location evidence="11">Virion membrane</location>
        <topology evidence="12">Single-pass type I membrane protein</topology>
    </subcellularLocation>
    <subcellularLocation>
        <location evidence="3 11">Host cell membrane</location>
        <topology evidence="12">Single-pass type I membrane protein</topology>
    </subcellularLocation>
</comment>
<comment type="domain">
    <molecule>Capsid protein</molecule>
    <text evidence="3 4">The very N-terminus also plays a role in the particle assembly process (By similarity). The N-terminus also contains a nuclear localization signal and a supra nuclear export signal (supraNES), which is an unusually strong NES that mediates host CRM1 binding in the absence of RanGTP and thus can bind CRM1, not only in the nucleus, but also in the cytoplasm (By similarity). The C-terminus functions as a protease during translation to cleave itself from the translating structural polyprotein (By similarity).</text>
</comment>
<comment type="domain">
    <text evidence="2">Structural polyprotein: As soon as the capsid protein has been autocleaved, an internal uncleaved signal peptide directs the remaining polyprotein to the endoplasmic reticulum.</text>
</comment>
<comment type="PTM">
    <text evidence="2">Structural polyprotein: Specific enzymatic cleavages in vivo yield mature proteins. Capsid protein is auto-cleaved during polyprotein translation, unmasking a signal peptide at the N-terminus of the precursor of E3/E2 (By similarity). The remaining polyprotein is then targeted to the host endoplasmic reticulum, where host signal peptidase cleaves it into pE2, 6K and E1 proteins. pE2 is further processed to mature E3 and E2 by host furin in trans-Golgi vesicle (By similarity).</text>
</comment>
<comment type="PTM">
    <molecule>Spike glycoprotein E2</molecule>
    <text evidence="2">Palmitoylated via thioester bonds. These palmitoylations may induce disruption of the C-terminus transmembrane. This would result in the reorientation of E2 C-terminus from lumenal to cytoplasmic side.</text>
</comment>
<comment type="PTM">
    <molecule>Spike glycoprotein E1</molecule>
    <text evidence="2">N-glycosylated.</text>
</comment>
<comment type="PTM">
    <molecule>Spike glycoprotein E2</molecule>
    <text evidence="2">N-glycosylated.</text>
</comment>
<comment type="PTM">
    <molecule>Assembly protein E3</molecule>
    <text evidence="2">N-glycosylated.</text>
</comment>
<comment type="PTM">
    <molecule>6K protein</molecule>
    <text evidence="2">Palmitoylated via thioester bonds.</text>
</comment>
<comment type="miscellaneous">
    <text evidence="17">Belongs to the Old World alphaviruses that usually cause fever, maculopapular rash, arthralgia and myalgia.</text>
</comment>
<comment type="miscellaneous">
    <text evidence="10">Structural polyprotein: Translated from a subgenomic RNA synthesized during togavirus replication.</text>
</comment>
<organismHost>
    <name type="scientific">Anopheles amictus</name>
    <dbReference type="NCBI Taxonomy" id="59117"/>
</organismHost>
<organismHost>
    <name type="scientific">Culex annulirostris</name>
    <name type="common">Common banded mosquito</name>
    <dbReference type="NCBI Taxonomy" id="162997"/>
</organismHost>
<organismHost>
    <name type="scientific">Homo sapiens</name>
    <name type="common">Human</name>
    <dbReference type="NCBI Taxonomy" id="9606"/>
</organismHost>
<organismHost>
    <name type="scientific">Macropus</name>
    <dbReference type="NCBI Taxonomy" id="9312"/>
</organismHost>
<dbReference type="EC" id="3.4.21.90" evidence="2"/>
<dbReference type="EMBL" id="U73745">
    <property type="protein sequence ID" value="AAB40702.1"/>
    <property type="molecule type" value="Genomic_RNA"/>
</dbReference>
<dbReference type="EMBL" id="AF339488">
    <property type="protein sequence ID" value="AAO33347.1"/>
    <property type="molecule type" value="Genomic_RNA"/>
</dbReference>
<dbReference type="PIR" id="C37264">
    <property type="entry name" value="C37264"/>
</dbReference>
<dbReference type="PIR" id="D21774">
    <property type="entry name" value="D21774"/>
</dbReference>
<dbReference type="RefSeq" id="NP_054024.1">
    <property type="nucleotide sequence ID" value="NC_001786.1"/>
</dbReference>
<dbReference type="PDB" id="2YEW">
    <property type="method" value="EM"/>
    <property type="resolution" value="5.00 A"/>
    <property type="chains" value="A/D/G/J=1-253, B/E/H/K=804-1239, C/F/I/L=322-742"/>
</dbReference>
<dbReference type="PDBsum" id="2YEW"/>
<dbReference type="SMR" id="P89946"/>
<dbReference type="MEROPS" id="S03.001"/>
<dbReference type="TCDB" id="1.G.4.1.3">
    <property type="family name" value="the viral pore-forming membrane fusion protein-4 (vmfp4) family"/>
</dbReference>
<dbReference type="iPTMnet" id="P89946"/>
<dbReference type="GeneID" id="1489701"/>
<dbReference type="KEGG" id="vg:1489701"/>
<dbReference type="EvolutionaryTrace" id="P89946"/>
<dbReference type="Proteomes" id="UP000007609">
    <property type="component" value="Segment"/>
</dbReference>
<dbReference type="GO" id="GO:0030430">
    <property type="term" value="C:host cell cytoplasm"/>
    <property type="evidence" value="ECO:0007669"/>
    <property type="project" value="UniProtKB-SubCell"/>
</dbReference>
<dbReference type="GO" id="GO:0042025">
    <property type="term" value="C:host cell nucleus"/>
    <property type="evidence" value="ECO:0007669"/>
    <property type="project" value="UniProtKB-SubCell"/>
</dbReference>
<dbReference type="GO" id="GO:0020002">
    <property type="term" value="C:host cell plasma membrane"/>
    <property type="evidence" value="ECO:0007669"/>
    <property type="project" value="UniProtKB-SubCell"/>
</dbReference>
<dbReference type="GO" id="GO:0016020">
    <property type="term" value="C:membrane"/>
    <property type="evidence" value="ECO:0007669"/>
    <property type="project" value="UniProtKB-KW"/>
</dbReference>
<dbReference type="GO" id="GO:0039619">
    <property type="term" value="C:T=4 icosahedral viral capsid"/>
    <property type="evidence" value="ECO:0007669"/>
    <property type="project" value="UniProtKB-KW"/>
</dbReference>
<dbReference type="GO" id="GO:0055036">
    <property type="term" value="C:virion membrane"/>
    <property type="evidence" value="ECO:0007669"/>
    <property type="project" value="UniProtKB-SubCell"/>
</dbReference>
<dbReference type="GO" id="GO:0003723">
    <property type="term" value="F:RNA binding"/>
    <property type="evidence" value="ECO:0007669"/>
    <property type="project" value="UniProtKB-KW"/>
</dbReference>
<dbReference type="GO" id="GO:0004252">
    <property type="term" value="F:serine-type endopeptidase activity"/>
    <property type="evidence" value="ECO:0007669"/>
    <property type="project" value="InterPro"/>
</dbReference>
<dbReference type="GO" id="GO:0005198">
    <property type="term" value="F:structural molecule activity"/>
    <property type="evidence" value="ECO:0007669"/>
    <property type="project" value="InterPro"/>
</dbReference>
<dbReference type="GO" id="GO:0039654">
    <property type="term" value="P:fusion of virus membrane with host endosome membrane"/>
    <property type="evidence" value="ECO:0007669"/>
    <property type="project" value="UniProtKB-KW"/>
</dbReference>
<dbReference type="GO" id="GO:0006508">
    <property type="term" value="P:proteolysis"/>
    <property type="evidence" value="ECO:0007669"/>
    <property type="project" value="UniProtKB-KW"/>
</dbReference>
<dbReference type="GO" id="GO:0046718">
    <property type="term" value="P:symbiont entry into host cell"/>
    <property type="evidence" value="ECO:0007669"/>
    <property type="project" value="UniProtKB-KW"/>
</dbReference>
<dbReference type="GO" id="GO:0039722">
    <property type="term" value="P:symbiont-mediated suppression of host toll-like receptor signaling pathway"/>
    <property type="evidence" value="ECO:0000250"/>
    <property type="project" value="UniProtKB"/>
</dbReference>
<dbReference type="GO" id="GO:0019062">
    <property type="term" value="P:virion attachment to host cell"/>
    <property type="evidence" value="ECO:0007669"/>
    <property type="project" value="UniProtKB-KW"/>
</dbReference>
<dbReference type="FunFam" id="2.40.10.10:FF:000076">
    <property type="entry name" value="Structural polyprotein"/>
    <property type="match status" value="1"/>
</dbReference>
<dbReference type="FunFam" id="2.60.98.10:FF:000002">
    <property type="entry name" value="Structural polyprotein"/>
    <property type="match status" value="1"/>
</dbReference>
<dbReference type="Gene3D" id="1.10.287.2230">
    <property type="match status" value="1"/>
</dbReference>
<dbReference type="Gene3D" id="2.60.40.350">
    <property type="match status" value="1"/>
</dbReference>
<dbReference type="Gene3D" id="2.60.40.3200">
    <property type="entry name" value="Alphavirus E2 glycoprotein, A domain"/>
    <property type="match status" value="1"/>
</dbReference>
<dbReference type="Gene3D" id="2.60.40.4310">
    <property type="entry name" value="Alphavirus E2 glycoprotein, domain B"/>
    <property type="match status" value="1"/>
</dbReference>
<dbReference type="Gene3D" id="2.60.40.2400">
    <property type="entry name" value="Alphavirus E2 glycoprotein, domain C"/>
    <property type="match status" value="1"/>
</dbReference>
<dbReference type="Gene3D" id="2.60.98.10">
    <property type="entry name" value="Tick-borne Encephalitis virus Glycoprotein, domain 1"/>
    <property type="match status" value="3"/>
</dbReference>
<dbReference type="Gene3D" id="2.40.10.10">
    <property type="entry name" value="Trypsin-like serine proteases"/>
    <property type="match status" value="2"/>
</dbReference>
<dbReference type="InterPro" id="IPR002548">
    <property type="entry name" value="Alpha_E1_glycop"/>
</dbReference>
<dbReference type="InterPro" id="IPR000936">
    <property type="entry name" value="Alpha_E2_glycop"/>
</dbReference>
<dbReference type="InterPro" id="IPR002533">
    <property type="entry name" value="Alpha_E3_glycop"/>
</dbReference>
<dbReference type="InterPro" id="IPR042304">
    <property type="entry name" value="Alphavir_E2_A"/>
</dbReference>
<dbReference type="InterPro" id="IPR042305">
    <property type="entry name" value="Alphavir_E2_B"/>
</dbReference>
<dbReference type="InterPro" id="IPR042306">
    <property type="entry name" value="Alphavir_E2_C"/>
</dbReference>
<dbReference type="InterPro" id="IPR000336">
    <property type="entry name" value="Flavivir/Alphavir_Ig-like_sf"/>
</dbReference>
<dbReference type="InterPro" id="IPR036253">
    <property type="entry name" value="Glycoprot_cen/dimer_sf"/>
</dbReference>
<dbReference type="InterPro" id="IPR038055">
    <property type="entry name" value="Glycoprot_E_dimer_dom"/>
</dbReference>
<dbReference type="InterPro" id="IPR014756">
    <property type="entry name" value="Ig_E-set"/>
</dbReference>
<dbReference type="InterPro" id="IPR009003">
    <property type="entry name" value="Peptidase_S1_PA"/>
</dbReference>
<dbReference type="InterPro" id="IPR043504">
    <property type="entry name" value="Peptidase_S1_PA_chymotrypsin"/>
</dbReference>
<dbReference type="InterPro" id="IPR000930">
    <property type="entry name" value="Peptidase_S3"/>
</dbReference>
<dbReference type="Pfam" id="PF01589">
    <property type="entry name" value="Alpha_E1_glycop"/>
    <property type="match status" value="1"/>
</dbReference>
<dbReference type="Pfam" id="PF00943">
    <property type="entry name" value="Alpha_E2_glycop"/>
    <property type="match status" value="1"/>
</dbReference>
<dbReference type="Pfam" id="PF01563">
    <property type="entry name" value="Alpha_E3_glycop"/>
    <property type="match status" value="1"/>
</dbReference>
<dbReference type="Pfam" id="PF00944">
    <property type="entry name" value="Peptidase_S3"/>
    <property type="match status" value="1"/>
</dbReference>
<dbReference type="PRINTS" id="PR00798">
    <property type="entry name" value="TOGAVIRIN"/>
</dbReference>
<dbReference type="SUPFAM" id="SSF81296">
    <property type="entry name" value="E set domains"/>
    <property type="match status" value="1"/>
</dbReference>
<dbReference type="SUPFAM" id="SSF50494">
    <property type="entry name" value="Trypsin-like serine proteases"/>
    <property type="match status" value="1"/>
</dbReference>
<dbReference type="SUPFAM" id="SSF56983">
    <property type="entry name" value="Viral glycoprotein, central and dimerisation domains"/>
    <property type="match status" value="1"/>
</dbReference>
<dbReference type="PROSITE" id="PS51690">
    <property type="entry name" value="ALPHAVIRUS_CP"/>
    <property type="match status" value="1"/>
</dbReference>
<organism>
    <name type="scientific">Barmah forest virus</name>
    <name type="common">BFV</name>
    <dbReference type="NCBI Taxonomy" id="11020"/>
    <lineage>
        <taxon>Viruses</taxon>
        <taxon>Riboviria</taxon>
        <taxon>Orthornavirae</taxon>
        <taxon>Kitrinoviricota</taxon>
        <taxon>Alsuviricetes</taxon>
        <taxon>Martellivirales</taxon>
        <taxon>Togaviridae</taxon>
        <taxon>Alphavirus</taxon>
    </lineage>
</organism>
<protein>
    <recommendedName>
        <fullName>Structural polyprotein</fullName>
    </recommendedName>
    <alternativeName>
        <fullName>p130</fullName>
    </alternativeName>
    <component>
        <recommendedName>
            <fullName>Capsid protein</fullName>
            <ecNumber evidence="2">3.4.21.90</ecNumber>
        </recommendedName>
        <alternativeName>
            <fullName>Coat protein</fullName>
            <shortName>C</shortName>
        </alternativeName>
    </component>
    <component>
        <recommendedName>
            <fullName>Precursor of protein E3/E2</fullName>
        </recommendedName>
        <alternativeName>
            <fullName>p62</fullName>
        </alternativeName>
        <alternativeName>
            <fullName>pE2</fullName>
        </alternativeName>
    </component>
    <component>
        <recommendedName>
            <fullName>Assembly protein E3</fullName>
        </recommendedName>
    </component>
    <component>
        <recommendedName>
            <fullName>Spike glycoprotein E2</fullName>
        </recommendedName>
        <alternativeName>
            <fullName>E2 envelope glycoprotein</fullName>
        </alternativeName>
    </component>
    <component>
        <recommendedName>
            <fullName>6K protein</fullName>
        </recommendedName>
    </component>
    <component>
        <recommendedName>
            <fullName>Spike glycoprotein E1</fullName>
        </recommendedName>
        <alternativeName>
            <fullName>E1 envelope glycoprotein</fullName>
        </alternativeName>
    </component>
</protein>
<sequence length="1239" mass="136297">MDFIPTQTFYGRRWRPAPVQRYIPQPQPPAPPRRRRGPSQLQQLVAALGALALQPKQKQKRAQKKPKKTPPPKPKKTQKPKKPTQKKKSKPGKRMRNCMKIENDCIFPVMLDGKVNGYACLVGDKVMKPAHVKGTIDNPELAKLTFKKSSKYDLECAQVPVCMKSDASKFTHEKPEGHYNWHHGAVQFSNGRFTIPTGSGKPGDSGRPIFDNTGKVVAIVLGGANEGARTALSVVTWNKDMVTRITPEESVEWSAAALNITALCVLQNLSFPCDAPPCAPCCYEKDPAGTLRLLSDHYYHPKYYELLDSTMHCPQGRRPKRSVAHFEAYKATRPYIGWCADCGLAGSCPSPVSIEHVWSDADDGVLKIQVSMQIGIAKSNTINHAKIRYMGANGVQEAERSTLSVSTTAPCDILATMGHFILARCRPGSQVEVSLSTDPKLLCRTPFSHKPRFIGNEKSPAPTGHKTRIPCKTYSHQTDLTREEITMHVPPDVPIQGLVSNTGKSYSLDPKTKTIKYKCTCGETVKEGTATNKITLFNCDTAPKCITYAVDNTVWQYNSQYVPRSEVTEVKGKIHVPFPLTDSTCAVSVAPEPQVTYRLGEVEFHFHPMYPTLFSIRSLGKDPSHSQEWIDTPMSKTIQVGAEGVEYVWGNNNPVRLWAQKSSSSSAHGNPISIVSHYYDLYPYWTITVLASLGLLIVISSGFSCFLCSVARTKCLTPYQLAPGAQLPTFIALLCCAKSARADTLDDFSYLWTNNQAMFWLQLASPVAAFLCLSYCCRNLACCMKIFLGISGLCVIATQAYEHSTTMPNQVGIPFKALIERPGYAGLPLSLVVIKSELVPSLVQDYITCNYKTVVPSPYIKCCGGAECSHKNEADYKCSVFTGVYPFMWGGAYCFCDTENSQMSEVYVTRGESCEADHAIAYQVHTASLKAQVMISIGELNQTVDVFVNGDSPARIQQSKFILGPISSAWSPFDHKVIVYRDEVYNEDYAPYGSGQAGRFGDIQSRTVNSTDVYANTNLKLKRPASGNVHVPYTQTPSGFSYWKKEKGVPLNRNAPFGCIIKVNPVRAENCVYGNIPISMDIADAHFTRIDESPSVSLKACEVQSCTYSSDFGGVASISYTSNKVGKCAIHSHSNSATMKDSVQDVQESGALSLFFATSSVEPNFVVQVCNARITCHGKCEPPKDHIVPYAAKHNDAEFPSISTTAWQWLAHTTSGPLTILVVAIIVVVVVSIVVCARH</sequence>
<name>POLS_BFV</name>
<reference key="1">
    <citation type="submission" date="1996-10" db="EMBL/GenBank/DDBJ databases">
        <authorList>
            <person name="Lee E."/>
            <person name="Stocks C."/>
            <person name="Lobigs P."/>
            <person name="Hislop A."/>
            <person name="Straub J."/>
            <person name="Marshall I."/>
            <person name="Weir R."/>
            <person name="Dalgarno L."/>
        </authorList>
    </citation>
    <scope>NUCLEOTIDE SEQUENCE [GENOMIC RNA]</scope>
</reference>
<reference key="2">
    <citation type="submission" date="2001-01" db="EMBL/GenBank/DDBJ databases">
        <title>Nucleotide sequence analyses of the 26S mRNAs of viruses of the genus Alphavirus.</title>
        <authorList>
            <person name="Kinney R.M."/>
            <person name="Pfeffer M."/>
        </authorList>
    </citation>
    <scope>NUCLEOTIDE SEQUENCE [GENOMIC RNA]</scope>
</reference>
<reference key="3">
    <citation type="journal article" date="2002" name="J. Biol. Chem.">
        <title>Alphavirus 6K proteins form ion channels.</title>
        <authorList>
            <person name="Melton J.V."/>
            <person name="Ewart G.D."/>
            <person name="Weir R.C."/>
            <person name="Board P.G."/>
            <person name="Lee E."/>
            <person name="Gage P.W."/>
        </authorList>
    </citation>
    <scope>FUNCTION (PROTEIN 6K)</scope>
    <scope>MUTAGENESIS OF SER-765</scope>
</reference>
<reference evidence="19" key="4">
    <citation type="journal article" date="2011" name="J. Virol.">
        <title>The structure of barmah forest virus as revealed by cryo-electron microscopy at a 6-angstrom resolution has detailed transmembrane protein architecture and interactions.</title>
        <authorList>
            <person name="Kostyuchenko V.A."/>
            <person name="Jakana J."/>
            <person name="Liu X."/>
            <person name="Haddow A.D."/>
            <person name="Aung M."/>
            <person name="Weaver S.C."/>
            <person name="Chiu W."/>
            <person name="Lok S.M."/>
        </authorList>
    </citation>
    <scope>STRUCTURE BY ELECTRON MICROSCOPY (5.00 ANGSTROMS) OF 1-253; 322-742 AND 801-1239</scope>
    <scope>GLYCOSYLATION AT ASN-941 AND ASN-1009</scope>
    <scope>DISULFIDE BONDS</scope>
    <scope>INTERACTION WITH SPIKE GLYCOPROTEIN E1 (SPIKE GLYCOPROTEIN E2)</scope>
    <scope>INTERACTION WITH SPIKE GLYCOPROTEIN E2 (SPIKE GLYCOPROTEIN E1)</scope>
    <scope>INTERACTION WITH THE CAPSID PROTEIN (SPIKE GLYCOPROTEIN E2)</scope>
    <scope>INTERACTION WITH THE SPIKE GLYCOPROTEIN E2 (CAPSID PROTEIN)</scope>
    <scope>PALMITOYLATION AT CYS-705; CYS-708; CYS-715; CYS-735; CYS-736 AND CYS-1236</scope>
</reference>
<keyword id="KW-0002">3D-structure</keyword>
<keyword id="KW-0167">Capsid protein</keyword>
<keyword id="KW-0165">Cleavage on pair of basic residues</keyword>
<keyword id="KW-1015">Disulfide bond</keyword>
<keyword id="KW-1170">Fusion of virus membrane with host endosomal membrane</keyword>
<keyword id="KW-1168">Fusion of virus membrane with host membrane</keyword>
<keyword id="KW-0325">Glycoprotein</keyword>
<keyword id="KW-1032">Host cell membrane</keyword>
<keyword id="KW-1035">Host cytoplasm</keyword>
<keyword id="KW-1038">Host endoplasmic reticulum</keyword>
<keyword id="KW-1040">Host Golgi apparatus</keyword>
<keyword id="KW-1043">Host membrane</keyword>
<keyword id="KW-1048">Host nucleus</keyword>
<keyword id="KW-0945">Host-virus interaction</keyword>
<keyword id="KW-0378">Hydrolase</keyword>
<keyword id="KW-0407">Ion channel</keyword>
<keyword id="KW-0406">Ion transport</keyword>
<keyword id="KW-0449">Lipoprotein</keyword>
<keyword id="KW-0472">Membrane</keyword>
<keyword id="KW-0564">Palmitate</keyword>
<keyword id="KW-0645">Protease</keyword>
<keyword id="KW-0694">RNA-binding</keyword>
<keyword id="KW-0720">Serine protease</keyword>
<keyword id="KW-1144">T=4 icosahedral capsid protein</keyword>
<keyword id="KW-0812">Transmembrane</keyword>
<keyword id="KW-1133">Transmembrane helix</keyword>
<keyword id="KW-0813">Transport</keyword>
<keyword id="KW-1161">Viral attachment to host cell</keyword>
<keyword id="KW-1234">Viral attachment to host entry receptor</keyword>
<keyword id="KW-1182">Viral ion channel</keyword>
<keyword id="KW-1162">Viral penetration into host cytoplasm</keyword>
<keyword id="KW-0946">Virion</keyword>
<keyword id="KW-1160">Virus entry into host cell</keyword>
<accession>P89946</accession>
<accession>Q80S23</accession>